<proteinExistence type="inferred from homology"/>
<comment type="function">
    <text evidence="1">DNA-dependent RNA polymerase catalyzes the transcription of DNA into RNA using the four ribonucleoside triphosphates as substrates.</text>
</comment>
<comment type="catalytic activity">
    <reaction evidence="1">
        <text>RNA(n) + a ribonucleoside 5'-triphosphate = RNA(n+1) + diphosphate</text>
        <dbReference type="Rhea" id="RHEA:21248"/>
        <dbReference type="Rhea" id="RHEA-COMP:14527"/>
        <dbReference type="Rhea" id="RHEA-COMP:17342"/>
        <dbReference type="ChEBI" id="CHEBI:33019"/>
        <dbReference type="ChEBI" id="CHEBI:61557"/>
        <dbReference type="ChEBI" id="CHEBI:140395"/>
        <dbReference type="EC" id="2.7.7.6"/>
    </reaction>
</comment>
<comment type="subunit">
    <text evidence="1">The RNAP catalytic core consists of 2 alpha, 1 beta, 1 beta' and 1 omega subunit. When a sigma factor is associated with the core the holoenzyme is formed, which can initiate transcription.</text>
</comment>
<comment type="similarity">
    <text evidence="1">Belongs to the RNA polymerase beta chain family.</text>
</comment>
<reference key="1">
    <citation type="submission" date="2006-08" db="EMBL/GenBank/DDBJ databases">
        <title>Complete sequence of chromosome 1 of Burkholderia cepacia AMMD.</title>
        <authorList>
            <person name="Copeland A."/>
            <person name="Lucas S."/>
            <person name="Lapidus A."/>
            <person name="Barry K."/>
            <person name="Detter J.C."/>
            <person name="Glavina del Rio T."/>
            <person name="Hammon N."/>
            <person name="Israni S."/>
            <person name="Pitluck S."/>
            <person name="Bruce D."/>
            <person name="Chain P."/>
            <person name="Malfatti S."/>
            <person name="Shin M."/>
            <person name="Vergez L."/>
            <person name="Schmutz J."/>
            <person name="Larimer F."/>
            <person name="Land M."/>
            <person name="Hauser L."/>
            <person name="Kyrpides N."/>
            <person name="Kim E."/>
            <person name="Parke J."/>
            <person name="Coenye T."/>
            <person name="Konstantinidis K."/>
            <person name="Ramette A."/>
            <person name="Tiedje J."/>
            <person name="Richardson P."/>
        </authorList>
    </citation>
    <scope>NUCLEOTIDE SEQUENCE [LARGE SCALE GENOMIC DNA]</scope>
    <source>
        <strain>ATCC BAA-244 / DSM 16087 / CCUG 44356 / LMG 19182 / AMMD</strain>
    </source>
</reference>
<protein>
    <recommendedName>
        <fullName evidence="1">DNA-directed RNA polymerase subunit beta</fullName>
        <shortName evidence="1">RNAP subunit beta</shortName>
        <ecNumber evidence="1">2.7.7.6</ecNumber>
    </recommendedName>
    <alternativeName>
        <fullName evidence="1">RNA polymerase subunit beta</fullName>
    </alternativeName>
    <alternativeName>
        <fullName evidence="1">Transcriptase subunit beta</fullName>
    </alternativeName>
</protein>
<sequence length="1368" mass="153271">MQYSFTEKKRIRKSFAKRPIVHQVPFLLATQLESFSTFLQADVPGTQRKPEGLQAAFTSVFPIVSHNGFARLEFVSYALSSPAFNIKECQQRGLTYCSALRAKVRLVILDKESPNKPVVKEVKEQEVYMGEIPLMTPTGSFVINGTERVIVSQLHRSPGVFFEHDKGKTHSSGKLLFSARIIPYRGSWLDFEFDPKDILYFRVDRRRKMPVTILLKAIGLTPEQILANFFVFDNFTLMDEGAQLEFVPERLRGEVARFDITDRDGKVIVQKDKRINAKHIRDLEAAKTKFISVPEDYLLGRVLAKNVVDGDTGEVIASANDEVTESVLEKLREAGIKEIQTLYTNDLDQGPYISSTLRVDETTDKTAARIAIYRMMRPGEPPTEEAVEALFNRLFYSEEAYDLSKVGRMKFNRRVGRDEITGPMTLQDDDILATIKILVELRNGKGEVDDIDHLGNRRVRCVGELAENQFRAGLVRVERAVKERLGQAESENLMPHDLINSKPISSAIREFFGSSQLSQFMDQTNPLSEITHKRRVSALGPGGLTRERAGFEVRDVHPTHYGRVCPIETPEGPNIGLINSLALYAHLNEYGFLETPYRKVVDSKVTDQIDYLSAIEEGRYMIAQANAAIDENGQLVDELVSSREAGETMMVTPDRIQYMDVAPSQIVSVAASLIPFLEHDDANRALMGSNMQRQAVPCLRPEKPVVGTGIERTCAVDSGTTVQAFRGGVVDYVDAGRIVIRVNDDEAVAGEVGVDIYNLIKYTRSNQNTNINQRPIVKMGDKVSRGDVLADGASTDLGELALGQNMLIAFMPWNGYNFEDSILISEKVVADDRYTSIHIEELNVVARDTKLGPEEITRDISNLAEVQLGRLDESGIVYIGAEVEAGDVLVGKVTPKGETQLTPEEKLLRAIFGEKASDVKDTSLRVPSGMSGTVIDVQVFTREGIQRDKRAQQIIDDELKRYRLDLNDQLRIVEGDAFQRLARMLVGKVANGGPKKLAKGTKIDQAYLEDLDHYHWFDIRLADDEAAAQLEAIKNSIEEKRHQFDLAFEEKRKKLTQGDELPPGVLKMVKVYLAVKRRLQPGDKMAGRHGNKGVVSKIVPIEDMPYMADGRPADVVLNPLGVPSRMNVGQVLEVHLGWAAKGLGWRIGEMLQRQAKIEEMRSFLTKIYNDSGRKEDLESFTDDEILELAKNLREGVPFATPVFDGATEEEMGKMLDLAFPDDIAEQLGMNPSKNQVRLYDGRTGEMFERRVTLGYMHYLKLHHLVDDKMHARSTGPYSLVTQQPLGGKAQFGGQRFGEMEVWALEAYGASYVLQEMLTVKSDDVNGRTKVYENLVKGDHVIDAGMPESFNVLVKEIRSLGIDIDLDRN</sequence>
<keyword id="KW-0240">DNA-directed RNA polymerase</keyword>
<keyword id="KW-0548">Nucleotidyltransferase</keyword>
<keyword id="KW-0804">Transcription</keyword>
<keyword id="KW-0808">Transferase</keyword>
<evidence type="ECO:0000255" key="1">
    <source>
        <dbReference type="HAMAP-Rule" id="MF_01321"/>
    </source>
</evidence>
<dbReference type="EC" id="2.7.7.6" evidence="1"/>
<dbReference type="EMBL" id="CP000440">
    <property type="protein sequence ID" value="ABI85819.1"/>
    <property type="molecule type" value="Genomic_DNA"/>
</dbReference>
<dbReference type="RefSeq" id="WP_011655757.1">
    <property type="nucleotide sequence ID" value="NZ_CP009798.1"/>
</dbReference>
<dbReference type="SMR" id="Q0BJ54"/>
<dbReference type="GeneID" id="93084326"/>
<dbReference type="KEGG" id="bam:Bamb_0259"/>
<dbReference type="PATRIC" id="fig|339670.21.peg.1361"/>
<dbReference type="eggNOG" id="COG0085">
    <property type="taxonomic scope" value="Bacteria"/>
</dbReference>
<dbReference type="Proteomes" id="UP000000662">
    <property type="component" value="Chromosome 1"/>
</dbReference>
<dbReference type="GO" id="GO:0000428">
    <property type="term" value="C:DNA-directed RNA polymerase complex"/>
    <property type="evidence" value="ECO:0007669"/>
    <property type="project" value="UniProtKB-KW"/>
</dbReference>
<dbReference type="GO" id="GO:0003677">
    <property type="term" value="F:DNA binding"/>
    <property type="evidence" value="ECO:0007669"/>
    <property type="project" value="UniProtKB-UniRule"/>
</dbReference>
<dbReference type="GO" id="GO:0003899">
    <property type="term" value="F:DNA-directed RNA polymerase activity"/>
    <property type="evidence" value="ECO:0007669"/>
    <property type="project" value="UniProtKB-UniRule"/>
</dbReference>
<dbReference type="GO" id="GO:0032549">
    <property type="term" value="F:ribonucleoside binding"/>
    <property type="evidence" value="ECO:0007669"/>
    <property type="project" value="InterPro"/>
</dbReference>
<dbReference type="GO" id="GO:0006351">
    <property type="term" value="P:DNA-templated transcription"/>
    <property type="evidence" value="ECO:0007669"/>
    <property type="project" value="UniProtKB-UniRule"/>
</dbReference>
<dbReference type="CDD" id="cd00653">
    <property type="entry name" value="RNA_pol_B_RPB2"/>
    <property type="match status" value="1"/>
</dbReference>
<dbReference type="FunFam" id="2.40.50.100:FF:000006">
    <property type="entry name" value="DNA-directed RNA polymerase subunit beta"/>
    <property type="match status" value="1"/>
</dbReference>
<dbReference type="FunFam" id="2.40.50.150:FF:000001">
    <property type="entry name" value="DNA-directed RNA polymerase subunit beta"/>
    <property type="match status" value="1"/>
</dbReference>
<dbReference type="FunFam" id="3.90.1800.10:FF:000001">
    <property type="entry name" value="DNA-directed RNA polymerase subunit beta"/>
    <property type="match status" value="1"/>
</dbReference>
<dbReference type="Gene3D" id="2.40.50.100">
    <property type="match status" value="1"/>
</dbReference>
<dbReference type="Gene3D" id="2.40.50.150">
    <property type="match status" value="1"/>
</dbReference>
<dbReference type="Gene3D" id="3.90.1100.10">
    <property type="match status" value="2"/>
</dbReference>
<dbReference type="Gene3D" id="2.30.150.10">
    <property type="entry name" value="DNA-directed RNA polymerase, beta subunit, external 1 domain"/>
    <property type="match status" value="1"/>
</dbReference>
<dbReference type="Gene3D" id="2.40.270.10">
    <property type="entry name" value="DNA-directed RNA polymerase, subunit 2, domain 6"/>
    <property type="match status" value="2"/>
</dbReference>
<dbReference type="Gene3D" id="3.90.1800.10">
    <property type="entry name" value="RNA polymerase alpha subunit dimerisation domain"/>
    <property type="match status" value="1"/>
</dbReference>
<dbReference type="Gene3D" id="3.90.1110.10">
    <property type="entry name" value="RNA polymerase Rpb2, domain 2"/>
    <property type="match status" value="2"/>
</dbReference>
<dbReference type="HAMAP" id="MF_01321">
    <property type="entry name" value="RNApol_bact_RpoB"/>
    <property type="match status" value="1"/>
</dbReference>
<dbReference type="InterPro" id="IPR042107">
    <property type="entry name" value="DNA-dir_RNA_pol_bsu_ext_1_sf"/>
</dbReference>
<dbReference type="InterPro" id="IPR019462">
    <property type="entry name" value="DNA-dir_RNA_pol_bsu_external_1"/>
</dbReference>
<dbReference type="InterPro" id="IPR015712">
    <property type="entry name" value="DNA-dir_RNA_pol_su2"/>
</dbReference>
<dbReference type="InterPro" id="IPR007120">
    <property type="entry name" value="DNA-dir_RNAP_su2_dom"/>
</dbReference>
<dbReference type="InterPro" id="IPR037033">
    <property type="entry name" value="DNA-dir_RNAP_su2_hyb_sf"/>
</dbReference>
<dbReference type="InterPro" id="IPR010243">
    <property type="entry name" value="RNA_pol_bsu_bac"/>
</dbReference>
<dbReference type="InterPro" id="IPR007121">
    <property type="entry name" value="RNA_pol_bsu_CS"/>
</dbReference>
<dbReference type="InterPro" id="IPR007644">
    <property type="entry name" value="RNA_pol_bsu_protrusion"/>
</dbReference>
<dbReference type="InterPro" id="IPR007642">
    <property type="entry name" value="RNA_pol_Rpb2_2"/>
</dbReference>
<dbReference type="InterPro" id="IPR037034">
    <property type="entry name" value="RNA_pol_Rpb2_2_sf"/>
</dbReference>
<dbReference type="InterPro" id="IPR007645">
    <property type="entry name" value="RNA_pol_Rpb2_3"/>
</dbReference>
<dbReference type="InterPro" id="IPR007641">
    <property type="entry name" value="RNA_pol_Rpb2_7"/>
</dbReference>
<dbReference type="InterPro" id="IPR014724">
    <property type="entry name" value="RNA_pol_RPB2_OB-fold"/>
</dbReference>
<dbReference type="NCBIfam" id="NF001616">
    <property type="entry name" value="PRK00405.1"/>
    <property type="match status" value="1"/>
</dbReference>
<dbReference type="NCBIfam" id="TIGR02013">
    <property type="entry name" value="rpoB"/>
    <property type="match status" value="1"/>
</dbReference>
<dbReference type="PANTHER" id="PTHR20856">
    <property type="entry name" value="DNA-DIRECTED RNA POLYMERASE I SUBUNIT 2"/>
    <property type="match status" value="1"/>
</dbReference>
<dbReference type="Pfam" id="PF04563">
    <property type="entry name" value="RNA_pol_Rpb2_1"/>
    <property type="match status" value="1"/>
</dbReference>
<dbReference type="Pfam" id="PF04561">
    <property type="entry name" value="RNA_pol_Rpb2_2"/>
    <property type="match status" value="2"/>
</dbReference>
<dbReference type="Pfam" id="PF04565">
    <property type="entry name" value="RNA_pol_Rpb2_3"/>
    <property type="match status" value="1"/>
</dbReference>
<dbReference type="Pfam" id="PF10385">
    <property type="entry name" value="RNA_pol_Rpb2_45"/>
    <property type="match status" value="1"/>
</dbReference>
<dbReference type="Pfam" id="PF00562">
    <property type="entry name" value="RNA_pol_Rpb2_6"/>
    <property type="match status" value="1"/>
</dbReference>
<dbReference type="Pfam" id="PF04560">
    <property type="entry name" value="RNA_pol_Rpb2_7"/>
    <property type="match status" value="1"/>
</dbReference>
<dbReference type="SUPFAM" id="SSF64484">
    <property type="entry name" value="beta and beta-prime subunits of DNA dependent RNA-polymerase"/>
    <property type="match status" value="1"/>
</dbReference>
<dbReference type="PROSITE" id="PS01166">
    <property type="entry name" value="RNA_POL_BETA"/>
    <property type="match status" value="1"/>
</dbReference>
<name>RPOB_BURCM</name>
<feature type="chain" id="PRO_0000300291" description="DNA-directed RNA polymerase subunit beta">
    <location>
        <begin position="1"/>
        <end position="1368"/>
    </location>
</feature>
<organism>
    <name type="scientific">Burkholderia ambifaria (strain ATCC BAA-244 / DSM 16087 / CCUG 44356 / LMG 19182 / AMMD)</name>
    <name type="common">Burkholderia cepacia (strain AMMD)</name>
    <dbReference type="NCBI Taxonomy" id="339670"/>
    <lineage>
        <taxon>Bacteria</taxon>
        <taxon>Pseudomonadati</taxon>
        <taxon>Pseudomonadota</taxon>
        <taxon>Betaproteobacteria</taxon>
        <taxon>Burkholderiales</taxon>
        <taxon>Burkholderiaceae</taxon>
        <taxon>Burkholderia</taxon>
        <taxon>Burkholderia cepacia complex</taxon>
    </lineage>
</organism>
<accession>Q0BJ54</accession>
<gene>
    <name evidence="1" type="primary">rpoB</name>
    <name type="ordered locus">Bamb_0259</name>
</gene>